<proteinExistence type="evidence at protein level"/>
<keyword id="KW-0025">Alternative splicing</keyword>
<keyword id="KW-1003">Cell membrane</keyword>
<keyword id="KW-0966">Cell projection</keyword>
<keyword id="KW-0325">Glycoprotein</keyword>
<keyword id="KW-0472">Membrane</keyword>
<keyword id="KW-1185">Reference proteome</keyword>
<keyword id="KW-0770">Synapse</keyword>
<keyword id="KW-0812">Transmembrane</keyword>
<keyword id="KW-1133">Transmembrane helix</keyword>
<sequence>MLRQVLHRGLRTCFSRLGHFIASHPVFFASAPVLISILLGASFSRYQVEESVEHLLAPQHSLAKIERNLVNSLFPVNRSKHRLYSDLQTPGRYGRVIVTSYQKANMLDQHHTDLILKLHTAVTKIQVPRPGFNYTFAHICVLNNDKTCIVDDIVHVLEELKNARATNRTNFAITYPITHLKDGRAVYNGHQLGGVTVHSKDRVKSAEAIQLTYYLQSINSLNDMVAERWESSFCDTVKLFQKSNSKVKIYPYTSSSLREDFQKTSRVSERYLVTSLILVVTMAILCCSMQDCVRSKPWLGLLGLVTISLATLTAAGIINLTGGKYNSTFLGVPFVMLGHGLYGTFEMLSSWRKTREDQHVKERTAEVYADSMLSFSLTTAMYLVTFGIGASPFTNIEAARIFCCNSCIAILFNYLYVLSFYGSSLVFTGYIENNYQHSIFCRKVPKPDVLQEKPAWYRFLLTARFSEETAEGEEANTYESHLLVCFLKRYYCDWITNTYVKPFVVLFYLIYISFALMGYLQVSEGSDLSNIVATATQTIEYTTAHQKYFNNYSPVIGFYIYESIEYWNSSVQEDVLEYTKGFVRISWFESYLNYLRKLNVSTDLPKKNFTDMLRNSFLKTPQFSHFQEDIIFSKKYNDEVDVVASRMFLVAKTMETNREELYDLLETLRRLSVTSKVKFIVFNPSFVYMDRYASSLGAPLHNSCISALFLLFFSAFLVADSLINVWITLTVVSVEFGVIGFMTLWKVELDCISVLCLIYGINYTIDNCAPLLSTFVLGKDFTRTKWVKNALEVHGVAILQSYLCYIVGLFPLAAVPSNLTCTLFRCLFLIAFVTFFHCFAILPVILTFLPPSKKKRKEKKNPENREEIECVEMVDIDSTRVVDQITTV</sequence>
<organism>
    <name type="scientific">Mus musculus</name>
    <name type="common">Mouse</name>
    <dbReference type="NCBI Taxonomy" id="10090"/>
    <lineage>
        <taxon>Eukaryota</taxon>
        <taxon>Metazoa</taxon>
        <taxon>Chordata</taxon>
        <taxon>Craniata</taxon>
        <taxon>Vertebrata</taxon>
        <taxon>Euteleostomi</taxon>
        <taxon>Mammalia</taxon>
        <taxon>Eutheria</taxon>
        <taxon>Euarchontoglires</taxon>
        <taxon>Glires</taxon>
        <taxon>Rodentia</taxon>
        <taxon>Myomorpha</taxon>
        <taxon>Muroidea</taxon>
        <taxon>Muridae</taxon>
        <taxon>Murinae</taxon>
        <taxon>Mus</taxon>
        <taxon>Mus</taxon>
    </lineage>
</organism>
<dbReference type="EMBL" id="BX088539">
    <property type="status" value="NOT_ANNOTATED_CDS"/>
    <property type="molecule type" value="Genomic_DNA"/>
</dbReference>
<dbReference type="EMBL" id="BX119953">
    <property type="status" value="NOT_ANNOTATED_CDS"/>
    <property type="molecule type" value="Genomic_DNA"/>
</dbReference>
<dbReference type="EMBL" id="BC116312">
    <property type="protein sequence ID" value="AAI16313.1"/>
    <property type="molecule type" value="mRNA"/>
</dbReference>
<dbReference type="EMBL" id="BC116313">
    <property type="protein sequence ID" value="AAI16314.1"/>
    <property type="molecule type" value="mRNA"/>
</dbReference>
<dbReference type="EMBL" id="AK036111">
    <property type="protein sequence ID" value="BAC29308.1"/>
    <property type="molecule type" value="mRNA"/>
</dbReference>
<dbReference type="CCDS" id="CCDS41188.1">
    <molecule id="Q14B62-1"/>
</dbReference>
<dbReference type="RefSeq" id="NP_001087219.1">
    <molecule id="Q14B62-1"/>
    <property type="nucleotide sequence ID" value="NM_001093750.1"/>
</dbReference>
<dbReference type="RefSeq" id="XP_006528856.1">
    <molecule id="Q14B62-2"/>
    <property type="nucleotide sequence ID" value="XM_006528793.3"/>
</dbReference>
<dbReference type="RefSeq" id="XP_011246114.1">
    <molecule id="Q14B62-1"/>
    <property type="nucleotide sequence ID" value="XM_011247812.2"/>
</dbReference>
<dbReference type="SMR" id="Q14B62"/>
<dbReference type="FunCoup" id="Q14B62">
    <property type="interactions" value="261"/>
</dbReference>
<dbReference type="IntAct" id="Q14B62">
    <property type="interactions" value="36"/>
</dbReference>
<dbReference type="MINT" id="Q14B62"/>
<dbReference type="STRING" id="10090.ENSMUSP00000039443"/>
<dbReference type="GlyConnect" id="2576">
    <property type="glycosylation" value="1 N-Linked glycan (1 site)"/>
</dbReference>
<dbReference type="GlyCosmos" id="Q14B62">
    <property type="glycosylation" value="10 sites, 1 glycan"/>
</dbReference>
<dbReference type="GlyGen" id="Q14B62">
    <property type="glycosylation" value="10 sites, 6 N-linked glycans (5 sites)"/>
</dbReference>
<dbReference type="iPTMnet" id="Q14B62"/>
<dbReference type="PhosphoSitePlus" id="Q14B62"/>
<dbReference type="PaxDb" id="10090-ENSMUSP00000039443"/>
<dbReference type="ProteomicsDB" id="291587">
    <molecule id="Q14B62-1"/>
</dbReference>
<dbReference type="ProteomicsDB" id="291588">
    <molecule id="Q14B62-2"/>
</dbReference>
<dbReference type="Antibodypedia" id="55285">
    <property type="antibodies" value="85 antibodies from 20 providers"/>
</dbReference>
<dbReference type="Ensembl" id="ENSMUST00000038665.6">
    <molecule id="Q14B62-1"/>
    <property type="protein sequence ID" value="ENSMUSP00000039443.6"/>
    <property type="gene ID" value="ENSMUSG00000041552.8"/>
</dbReference>
<dbReference type="GeneID" id="211612"/>
<dbReference type="KEGG" id="mmu:211612"/>
<dbReference type="UCSC" id="uc009urw.1">
    <molecule id="Q14B62-1"/>
    <property type="organism name" value="mouse"/>
</dbReference>
<dbReference type="AGR" id="MGI:2685233"/>
<dbReference type="CTD" id="139411"/>
<dbReference type="MGI" id="MGI:2685233">
    <property type="gene designation" value="Ptchd1"/>
</dbReference>
<dbReference type="VEuPathDB" id="HostDB:ENSMUSG00000041552"/>
<dbReference type="eggNOG" id="KOG1934">
    <property type="taxonomic scope" value="Eukaryota"/>
</dbReference>
<dbReference type="GeneTree" id="ENSGT00940000157080"/>
<dbReference type="HOGENOM" id="CLU_002359_2_2_1"/>
<dbReference type="InParanoid" id="Q14B62"/>
<dbReference type="OMA" id="TMEYTAA"/>
<dbReference type="OrthoDB" id="10027883at2759"/>
<dbReference type="PhylomeDB" id="Q14B62"/>
<dbReference type="TreeFam" id="TF331806"/>
<dbReference type="BioGRID-ORCS" id="211612">
    <property type="hits" value="2 hits in 78 CRISPR screens"/>
</dbReference>
<dbReference type="ChiTaRS" id="Ptchd1">
    <property type="organism name" value="mouse"/>
</dbReference>
<dbReference type="PRO" id="PR:Q14B62"/>
<dbReference type="Proteomes" id="UP000000589">
    <property type="component" value="Chromosome X"/>
</dbReference>
<dbReference type="RNAct" id="Q14B62">
    <property type="molecule type" value="protein"/>
</dbReference>
<dbReference type="Bgee" id="ENSMUSG00000041552">
    <property type="expression patterns" value="Expressed in metencephalon and 53 other cell types or tissues"/>
</dbReference>
<dbReference type="ExpressionAtlas" id="Q14B62">
    <property type="expression patterns" value="baseline and differential"/>
</dbReference>
<dbReference type="GO" id="GO:0043197">
    <property type="term" value="C:dendritic spine"/>
    <property type="evidence" value="ECO:0000250"/>
    <property type="project" value="UniProtKB"/>
</dbReference>
<dbReference type="GO" id="GO:0005886">
    <property type="term" value="C:plasma membrane"/>
    <property type="evidence" value="ECO:0007669"/>
    <property type="project" value="UniProtKB-SubCell"/>
</dbReference>
<dbReference type="GO" id="GO:0045202">
    <property type="term" value="C:synapse"/>
    <property type="evidence" value="ECO:0000314"/>
    <property type="project" value="MGI"/>
</dbReference>
<dbReference type="GO" id="GO:0050890">
    <property type="term" value="P:cognition"/>
    <property type="evidence" value="ECO:0000315"/>
    <property type="project" value="UniProtKB"/>
</dbReference>
<dbReference type="GO" id="GO:0098976">
    <property type="term" value="P:excitatory chemical synaptic transmission"/>
    <property type="evidence" value="ECO:0000315"/>
    <property type="project" value="MGI"/>
</dbReference>
<dbReference type="GO" id="GO:0098977">
    <property type="term" value="P:inhibitory chemical synaptic transmission"/>
    <property type="evidence" value="ECO:0000315"/>
    <property type="project" value="MGI"/>
</dbReference>
<dbReference type="GO" id="GO:0007616">
    <property type="term" value="P:long-term memory"/>
    <property type="evidence" value="ECO:0000315"/>
    <property type="project" value="MGI"/>
</dbReference>
<dbReference type="GO" id="GO:0007614">
    <property type="term" value="P:short-term memory"/>
    <property type="evidence" value="ECO:0000315"/>
    <property type="project" value="MGI"/>
</dbReference>
<dbReference type="GO" id="GO:0007224">
    <property type="term" value="P:smoothened signaling pathway"/>
    <property type="evidence" value="ECO:0007669"/>
    <property type="project" value="Ensembl"/>
</dbReference>
<dbReference type="GO" id="GO:0035176">
    <property type="term" value="P:social behavior"/>
    <property type="evidence" value="ECO:0000315"/>
    <property type="project" value="UniProtKB"/>
</dbReference>
<dbReference type="GO" id="GO:0021794">
    <property type="term" value="P:thalamus development"/>
    <property type="evidence" value="ECO:0000315"/>
    <property type="project" value="UniProtKB"/>
</dbReference>
<dbReference type="FunFam" id="1.20.1640.10:FF:000016">
    <property type="entry name" value="Patched domain-containing protein 1"/>
    <property type="match status" value="1"/>
</dbReference>
<dbReference type="FunFam" id="1.20.1640.10:FF:000017">
    <property type="entry name" value="Patched domain-containing protein 1"/>
    <property type="match status" value="1"/>
</dbReference>
<dbReference type="Gene3D" id="1.20.1640.10">
    <property type="entry name" value="Multidrug efflux transporter AcrB transmembrane domain"/>
    <property type="match status" value="2"/>
</dbReference>
<dbReference type="InterPro" id="IPR051697">
    <property type="entry name" value="Patched_domain-protein"/>
</dbReference>
<dbReference type="InterPro" id="IPR003392">
    <property type="entry name" value="PTHD_SSD"/>
</dbReference>
<dbReference type="InterPro" id="IPR000731">
    <property type="entry name" value="SSD"/>
</dbReference>
<dbReference type="PANTHER" id="PTHR10796:SF36">
    <property type="entry name" value="PATCHED DOMAIN-CONTAINING PROTEIN 1"/>
    <property type="match status" value="1"/>
</dbReference>
<dbReference type="PANTHER" id="PTHR10796">
    <property type="entry name" value="PATCHED-RELATED"/>
    <property type="match status" value="1"/>
</dbReference>
<dbReference type="Pfam" id="PF02460">
    <property type="entry name" value="Patched"/>
    <property type="match status" value="1"/>
</dbReference>
<dbReference type="SUPFAM" id="SSF82866">
    <property type="entry name" value="Multidrug efflux transporter AcrB transmembrane domain"/>
    <property type="match status" value="2"/>
</dbReference>
<dbReference type="PROSITE" id="PS50156">
    <property type="entry name" value="SSD"/>
    <property type="match status" value="1"/>
</dbReference>
<comment type="function">
    <text evidence="1 5">Required for the development and function of the thalamic reticular nucleus (TRN), a part of the thalamus that is critical for thalamocortical transmission, generation of sleep rhythms, sensorimotor processing and attention. Can bind cholesterol in vitro (By similarity).</text>
</comment>
<comment type="interaction">
    <interactant intactId="EBI-27105784">
        <id>Q14B62</id>
    </interactant>
    <interactant intactId="EBI-300895">
        <id>Q62108</id>
        <label>Dlg4</label>
    </interactant>
    <organismsDiffer>false</organismsDiffer>
    <experiments>8</experiments>
</comment>
<comment type="subcellular location">
    <subcellularLocation>
        <location evidence="1">Cell membrane</location>
        <topology evidence="1">Multi-pass membrane protein</topology>
    </subcellularLocation>
    <subcellularLocation>
        <location evidence="1">Cell projection</location>
        <location evidence="1">Dendritic spine</location>
    </subcellularLocation>
</comment>
<comment type="alternative products">
    <event type="alternative splicing"/>
    <isoform>
        <id>Q14B62-1</id>
        <name>1</name>
        <sequence type="displayed"/>
    </isoform>
    <isoform>
        <id>Q14B62-2</id>
        <name>2</name>
        <sequence type="described" ref="VSP_023514"/>
    </isoform>
</comment>
<comment type="tissue specificity">
    <text evidence="4 5">Broadly expressed in the brain (PubMed:20844286). Selectively expressed in the thalamic reticular nucleus (TRN) in early development and continues to be enriched in this structure throughout adult life (PubMed:27007844).</text>
</comment>
<comment type="developmental stage">
    <text evidence="4 5">Widely expressed in the developing brain from 9.5 day post coitum (dpc) to postnatal day 1 (P1) (PubMed:20844286). Specifically expressed in the thalamic reticular nucleus (TRN) at birth. Expressed in the striatum, cortex and cerebellum by P15 onwards (PubMed:27007844).</text>
</comment>
<comment type="disruption phenotype">
    <text evidence="5">Mice show decreased spindles and sleep fragmentation, learning defects, hyper-aggressive behavior and motor defects. Selective deletion in the thalamic reticular nucleus (TRN) leads to attention deficits and hyperactivity. Defects are probably due to dcreased TRN activity through mechanisms involving small conductance calcium-dependent potassium currents (SK).</text>
</comment>
<comment type="similarity">
    <text evidence="8">Belongs to the patched family.</text>
</comment>
<name>PTHD1_MOUSE</name>
<reference key="1">
    <citation type="journal article" date="2009" name="PLoS Biol.">
        <title>Lineage-specific biology revealed by a finished genome assembly of the mouse.</title>
        <authorList>
            <person name="Church D.M."/>
            <person name="Goodstadt L."/>
            <person name="Hillier L.W."/>
            <person name="Zody M.C."/>
            <person name="Goldstein S."/>
            <person name="She X."/>
            <person name="Bult C.J."/>
            <person name="Agarwala R."/>
            <person name="Cherry J.L."/>
            <person name="DiCuccio M."/>
            <person name="Hlavina W."/>
            <person name="Kapustin Y."/>
            <person name="Meric P."/>
            <person name="Maglott D."/>
            <person name="Birtle Z."/>
            <person name="Marques A.C."/>
            <person name="Graves T."/>
            <person name="Zhou S."/>
            <person name="Teague B."/>
            <person name="Potamousis K."/>
            <person name="Churas C."/>
            <person name="Place M."/>
            <person name="Herschleb J."/>
            <person name="Runnheim R."/>
            <person name="Forrest D."/>
            <person name="Amos-Landgraf J."/>
            <person name="Schwartz D.C."/>
            <person name="Cheng Z."/>
            <person name="Lindblad-Toh K."/>
            <person name="Eichler E.E."/>
            <person name="Ponting C.P."/>
        </authorList>
    </citation>
    <scope>NUCLEOTIDE SEQUENCE [LARGE SCALE GENOMIC DNA]</scope>
    <source>
        <strain>C57BL/6J</strain>
    </source>
</reference>
<reference key="2">
    <citation type="journal article" date="2004" name="Genome Res.">
        <title>The status, quality, and expansion of the NIH full-length cDNA project: the Mammalian Gene Collection (MGC).</title>
        <authorList>
            <consortium name="The MGC Project Team"/>
        </authorList>
    </citation>
    <scope>NUCLEOTIDE SEQUENCE [LARGE SCALE MRNA] (ISOFORM 1)</scope>
</reference>
<reference key="3">
    <citation type="journal article" date="2005" name="Science">
        <title>The transcriptional landscape of the mammalian genome.</title>
        <authorList>
            <person name="Carninci P."/>
            <person name="Kasukawa T."/>
            <person name="Katayama S."/>
            <person name="Gough J."/>
            <person name="Frith M.C."/>
            <person name="Maeda N."/>
            <person name="Oyama R."/>
            <person name="Ravasi T."/>
            <person name="Lenhard B."/>
            <person name="Wells C."/>
            <person name="Kodzius R."/>
            <person name="Shimokawa K."/>
            <person name="Bajic V.B."/>
            <person name="Brenner S.E."/>
            <person name="Batalov S."/>
            <person name="Forrest A.R."/>
            <person name="Zavolan M."/>
            <person name="Davis M.J."/>
            <person name="Wilming L.G."/>
            <person name="Aidinis V."/>
            <person name="Allen J.E."/>
            <person name="Ambesi-Impiombato A."/>
            <person name="Apweiler R."/>
            <person name="Aturaliya R.N."/>
            <person name="Bailey T.L."/>
            <person name="Bansal M."/>
            <person name="Baxter L."/>
            <person name="Beisel K.W."/>
            <person name="Bersano T."/>
            <person name="Bono H."/>
            <person name="Chalk A.M."/>
            <person name="Chiu K.P."/>
            <person name="Choudhary V."/>
            <person name="Christoffels A."/>
            <person name="Clutterbuck D.R."/>
            <person name="Crowe M.L."/>
            <person name="Dalla E."/>
            <person name="Dalrymple B.P."/>
            <person name="de Bono B."/>
            <person name="Della Gatta G."/>
            <person name="di Bernardo D."/>
            <person name="Down T."/>
            <person name="Engstrom P."/>
            <person name="Fagiolini M."/>
            <person name="Faulkner G."/>
            <person name="Fletcher C.F."/>
            <person name="Fukushima T."/>
            <person name="Furuno M."/>
            <person name="Futaki S."/>
            <person name="Gariboldi M."/>
            <person name="Georgii-Hemming P."/>
            <person name="Gingeras T.R."/>
            <person name="Gojobori T."/>
            <person name="Green R.E."/>
            <person name="Gustincich S."/>
            <person name="Harbers M."/>
            <person name="Hayashi Y."/>
            <person name="Hensch T.K."/>
            <person name="Hirokawa N."/>
            <person name="Hill D."/>
            <person name="Huminiecki L."/>
            <person name="Iacono M."/>
            <person name="Ikeo K."/>
            <person name="Iwama A."/>
            <person name="Ishikawa T."/>
            <person name="Jakt M."/>
            <person name="Kanapin A."/>
            <person name="Katoh M."/>
            <person name="Kawasawa Y."/>
            <person name="Kelso J."/>
            <person name="Kitamura H."/>
            <person name="Kitano H."/>
            <person name="Kollias G."/>
            <person name="Krishnan S.P."/>
            <person name="Kruger A."/>
            <person name="Kummerfeld S.K."/>
            <person name="Kurochkin I.V."/>
            <person name="Lareau L.F."/>
            <person name="Lazarevic D."/>
            <person name="Lipovich L."/>
            <person name="Liu J."/>
            <person name="Liuni S."/>
            <person name="McWilliam S."/>
            <person name="Madan Babu M."/>
            <person name="Madera M."/>
            <person name="Marchionni L."/>
            <person name="Matsuda H."/>
            <person name="Matsuzawa S."/>
            <person name="Miki H."/>
            <person name="Mignone F."/>
            <person name="Miyake S."/>
            <person name="Morris K."/>
            <person name="Mottagui-Tabar S."/>
            <person name="Mulder N."/>
            <person name="Nakano N."/>
            <person name="Nakauchi H."/>
            <person name="Ng P."/>
            <person name="Nilsson R."/>
            <person name="Nishiguchi S."/>
            <person name="Nishikawa S."/>
            <person name="Nori F."/>
            <person name="Ohara O."/>
            <person name="Okazaki Y."/>
            <person name="Orlando V."/>
            <person name="Pang K.C."/>
            <person name="Pavan W.J."/>
            <person name="Pavesi G."/>
            <person name="Pesole G."/>
            <person name="Petrovsky N."/>
            <person name="Piazza S."/>
            <person name="Reed J."/>
            <person name="Reid J.F."/>
            <person name="Ring B.Z."/>
            <person name="Ringwald M."/>
            <person name="Rost B."/>
            <person name="Ruan Y."/>
            <person name="Salzberg S.L."/>
            <person name="Sandelin A."/>
            <person name="Schneider C."/>
            <person name="Schoenbach C."/>
            <person name="Sekiguchi K."/>
            <person name="Semple C.A."/>
            <person name="Seno S."/>
            <person name="Sessa L."/>
            <person name="Sheng Y."/>
            <person name="Shibata Y."/>
            <person name="Shimada H."/>
            <person name="Shimada K."/>
            <person name="Silva D."/>
            <person name="Sinclair B."/>
            <person name="Sperling S."/>
            <person name="Stupka E."/>
            <person name="Sugiura K."/>
            <person name="Sultana R."/>
            <person name="Takenaka Y."/>
            <person name="Taki K."/>
            <person name="Tammoja K."/>
            <person name="Tan S.L."/>
            <person name="Tang S."/>
            <person name="Taylor M.S."/>
            <person name="Tegner J."/>
            <person name="Teichmann S.A."/>
            <person name="Ueda H.R."/>
            <person name="van Nimwegen E."/>
            <person name="Verardo R."/>
            <person name="Wei C.L."/>
            <person name="Yagi K."/>
            <person name="Yamanishi H."/>
            <person name="Zabarovsky E."/>
            <person name="Zhu S."/>
            <person name="Zimmer A."/>
            <person name="Hide W."/>
            <person name="Bult C."/>
            <person name="Grimmond S.M."/>
            <person name="Teasdale R.D."/>
            <person name="Liu E.T."/>
            <person name="Brusic V."/>
            <person name="Quackenbush J."/>
            <person name="Wahlestedt C."/>
            <person name="Mattick J.S."/>
            <person name="Hume D.A."/>
            <person name="Kai C."/>
            <person name="Sasaki D."/>
            <person name="Tomaru Y."/>
            <person name="Fukuda S."/>
            <person name="Kanamori-Katayama M."/>
            <person name="Suzuki M."/>
            <person name="Aoki J."/>
            <person name="Arakawa T."/>
            <person name="Iida J."/>
            <person name="Imamura K."/>
            <person name="Itoh M."/>
            <person name="Kato T."/>
            <person name="Kawaji H."/>
            <person name="Kawagashira N."/>
            <person name="Kawashima T."/>
            <person name="Kojima M."/>
            <person name="Kondo S."/>
            <person name="Konno H."/>
            <person name="Nakano K."/>
            <person name="Ninomiya N."/>
            <person name="Nishio T."/>
            <person name="Okada M."/>
            <person name="Plessy C."/>
            <person name="Shibata K."/>
            <person name="Shiraki T."/>
            <person name="Suzuki S."/>
            <person name="Tagami M."/>
            <person name="Waki K."/>
            <person name="Watahiki A."/>
            <person name="Okamura-Oho Y."/>
            <person name="Suzuki H."/>
            <person name="Kawai J."/>
            <person name="Hayashizaki Y."/>
        </authorList>
    </citation>
    <scope>NUCLEOTIDE SEQUENCE [LARGE SCALE MRNA] OF 1-852 (ISOFORM 2)</scope>
    <source>
        <strain>C57BL/6J</strain>
        <tissue>Cerebellum</tissue>
    </source>
</reference>
<reference key="4">
    <citation type="journal article" date="2010" name="Sci. Transl. Med.">
        <title>Disruption at the PTCHD1 Locus on Xp22.11 in Autism spectrum disorder and intellectual disability.</title>
        <authorList>
            <person name="Noor A."/>
            <person name="Whibley A."/>
            <person name="Marshall C.R."/>
            <person name="Gianakopoulos P.J."/>
            <person name="Piton A."/>
            <person name="Carson A.R."/>
            <person name="Orlic-Milacic M."/>
            <person name="Lionel A.C."/>
            <person name="Sato D."/>
            <person name="Pinto D."/>
            <person name="Drmic I."/>
            <person name="Noakes C."/>
            <person name="Senman L."/>
            <person name="Zhang X."/>
            <person name="Mo R."/>
            <person name="Gauthier J."/>
            <person name="Crosbie J."/>
            <person name="Pagnamenta A.T."/>
            <person name="Munson J."/>
            <person name="Estes A.M."/>
            <person name="Fiebig A."/>
            <person name="Franke A."/>
            <person name="Schreiber S."/>
            <person name="Stewart A.F."/>
            <person name="Roberts R."/>
            <person name="McPherson R."/>
            <person name="Guter S.J."/>
            <person name="Cook E.H. Jr."/>
            <person name="Dawson G."/>
            <person name="Schellenberg G.D."/>
            <person name="Battaglia A."/>
            <person name="Maestrini E."/>
            <person name="Jeng L."/>
            <person name="Hutchison T."/>
            <person name="Rajcan-Separovic E."/>
            <person name="Chudley A.E."/>
            <person name="Lewis S.M."/>
            <person name="Liu X."/>
            <person name="Holden J.J."/>
            <person name="Fernandez B."/>
            <person name="Zwaigenbaum L."/>
            <person name="Bryson S.E."/>
            <person name="Roberts W."/>
            <person name="Szatmari P."/>
            <person name="Gallagher L."/>
            <person name="Stratton M.R."/>
            <person name="Gecz J."/>
            <person name="Brady A.F."/>
            <person name="Schwartz C.E."/>
            <person name="Schachar R.J."/>
            <person name="Monaco A.P."/>
            <person name="Rouleau G.A."/>
            <person name="Hui C.C."/>
            <person name="Lucy Raymond F."/>
            <person name="Scherer S.W."/>
            <person name="Vincent J.B."/>
        </authorList>
    </citation>
    <scope>TISSUE SPECIFICITY</scope>
    <scope>DEVELOPMENTAL STAGE</scope>
</reference>
<reference key="5">
    <citation type="journal article" date="2016" name="Nature">
        <title>Thalamic reticular impairment underlies attention deficit in Ptchd1(Y/-) mice.</title>
        <authorList>
            <person name="Wells M.F."/>
            <person name="Wimmer R.D."/>
            <person name="Schmitt L.I."/>
            <person name="Feng G."/>
            <person name="Halassa M.M."/>
        </authorList>
    </citation>
    <scope>FUNCTION</scope>
    <scope>TISSUE SPECIFICITY</scope>
    <scope>DEVELOPMENTAL STAGE</scope>
    <scope>DISRUPTION PHENOTYPE</scope>
</reference>
<reference key="6">
    <citation type="journal article" date="2024" name="Cells">
        <title>Nonsynonymous mutations in intellectual disability and autism spectrum disorder gene PTCHD1 disrupt N-glycosylation and reduce protein stability.</title>
        <authorList>
            <person name="Xie C.T.Y."/>
            <person name="Pastore S.F."/>
            <person name="Vincent J.B."/>
            <person name="Frankland P.W."/>
            <person name="Hamel P.A."/>
        </authorList>
    </citation>
    <scope>MUTAGENESIS OF PRO-32; PRO-75; LYS-181; GLY-303; PHE-549 AND 885-ILE--VAL-888</scope>
</reference>
<evidence type="ECO:0000250" key="1">
    <source>
        <dbReference type="UniProtKB" id="Q96NR3"/>
    </source>
</evidence>
<evidence type="ECO:0000255" key="2"/>
<evidence type="ECO:0000255" key="3">
    <source>
        <dbReference type="PROSITE-ProRule" id="PRU00199"/>
    </source>
</evidence>
<evidence type="ECO:0000269" key="4">
    <source>
    </source>
</evidence>
<evidence type="ECO:0000269" key="5">
    <source>
    </source>
</evidence>
<evidence type="ECO:0000269" key="6">
    <source>
    </source>
</evidence>
<evidence type="ECO:0000303" key="7">
    <source>
    </source>
</evidence>
<evidence type="ECO:0000305" key="8"/>
<evidence type="ECO:0000312" key="9">
    <source>
        <dbReference type="MGI" id="MGI:2685233"/>
    </source>
</evidence>
<gene>
    <name evidence="9" type="primary">ptchd1</name>
</gene>
<feature type="chain" id="PRO_0000280041" description="Patched domain-containing protein 1">
    <location>
        <begin position="1"/>
        <end position="888"/>
    </location>
</feature>
<feature type="transmembrane region" description="Helical" evidence="2">
    <location>
        <begin position="20"/>
        <end position="40"/>
    </location>
</feature>
<feature type="transmembrane region" description="Helical" evidence="2">
    <location>
        <begin position="273"/>
        <end position="293"/>
    </location>
</feature>
<feature type="transmembrane region" description="Helical" evidence="2">
    <location>
        <begin position="298"/>
        <end position="318"/>
    </location>
</feature>
<feature type="transmembrane region" description="Helical" evidence="2">
    <location>
        <begin position="328"/>
        <end position="348"/>
    </location>
</feature>
<feature type="transmembrane region" description="Helical" evidence="2">
    <location>
        <begin position="373"/>
        <end position="393"/>
    </location>
</feature>
<feature type="transmembrane region" description="Helical" evidence="2">
    <location>
        <begin position="407"/>
        <end position="427"/>
    </location>
</feature>
<feature type="transmembrane region" description="Helical" evidence="2">
    <location>
        <begin position="502"/>
        <end position="522"/>
    </location>
</feature>
<feature type="transmembrane region" description="Helical" evidence="2">
    <location>
        <begin position="707"/>
        <end position="727"/>
    </location>
</feature>
<feature type="transmembrane region" description="Helical" evidence="2">
    <location>
        <begin position="738"/>
        <end position="758"/>
    </location>
</feature>
<feature type="transmembrane region" description="Helical" evidence="2">
    <location>
        <begin position="795"/>
        <end position="815"/>
    </location>
</feature>
<feature type="transmembrane region" description="Helical" evidence="2">
    <location>
        <begin position="826"/>
        <end position="846"/>
    </location>
</feature>
<feature type="domain" description="SSD" evidence="3">
    <location>
        <begin position="268"/>
        <end position="427"/>
    </location>
</feature>
<feature type="glycosylation site" description="N-linked (GlcNAc...) asparagine" evidence="2">
    <location>
        <position position="77"/>
    </location>
</feature>
<feature type="glycosylation site" description="N-linked (GlcNAc...) asparagine" evidence="2">
    <location>
        <position position="133"/>
    </location>
</feature>
<feature type="glycosylation site" description="N-linked (GlcNAc...) asparagine" evidence="2">
    <location>
        <position position="167"/>
    </location>
</feature>
<feature type="glycosylation site" description="N-linked (GlcNAc...) asparagine" evidence="2">
    <location>
        <position position="319"/>
    </location>
</feature>
<feature type="glycosylation site" description="N-linked (GlcNAc...) asparagine" evidence="2">
    <location>
        <position position="326"/>
    </location>
</feature>
<feature type="glycosylation site" description="N-linked (GlcNAc...) asparagine" evidence="2">
    <location>
        <position position="568"/>
    </location>
</feature>
<feature type="glycosylation site" description="N-linked (GlcNAc...) asparagine" evidence="2">
    <location>
        <position position="599"/>
    </location>
</feature>
<feature type="glycosylation site" description="N-linked (GlcNAc...) asparagine" evidence="2">
    <location>
        <position position="608"/>
    </location>
</feature>
<feature type="glycosylation site" description="N-linked (GlcNAc...) asparagine" evidence="2">
    <location>
        <position position="762"/>
    </location>
</feature>
<feature type="glycosylation site" description="N-linked (GlcNAc...) asparagine" evidence="2">
    <location>
        <position position="818"/>
    </location>
</feature>
<feature type="splice variant" id="VSP_023514" description="In isoform 2." evidence="7">
    <location>
        <begin position="1"/>
        <end position="105"/>
    </location>
</feature>
<feature type="mutagenesis site" description="Results in defective post-translational processing and glycosylation. Decreased protein half-life and stability." evidence="6">
    <original>P</original>
    <variation>R</variation>
    <location>
        <position position="32"/>
    </location>
</feature>
<feature type="mutagenesis site" description="No effect on post-translational processing. No effect on protein half-life and stability." evidence="6">
    <original>P</original>
    <variation>Q</variation>
    <location>
        <position position="75"/>
    </location>
</feature>
<feature type="mutagenesis site" description="No effect on post-translational processing." evidence="6">
    <original>K</original>
    <variation>T</variation>
    <location>
        <position position="181"/>
    </location>
</feature>
<feature type="mutagenesis site" description="Results in defective post-translational processing and glycosylation." evidence="6">
    <original>G</original>
    <variation>R</variation>
    <location>
        <position position="303"/>
    </location>
</feature>
<feature type="mutagenesis site" description="Results in defective post-translational processing and glycosylation. Decreased protein half-life and stability." evidence="6">
    <original>F</original>
    <variation>C</variation>
    <location>
        <position position="549"/>
    </location>
</feature>
<feature type="mutagenesis site" description="No effect on post-translational processing. No effect on protein half-life and stability." evidence="6">
    <location>
        <begin position="885"/>
        <end position="888"/>
    </location>
</feature>
<feature type="sequence conflict" description="In Ref. 2; AAI16313." evidence="8" ref="2">
    <original>N</original>
    <variation>D</variation>
    <location>
        <position position="767"/>
    </location>
</feature>
<feature type="sequence conflict" description="In Ref. 2; AAI16314." evidence="8" ref="2">
    <original>A</original>
    <variation>T</variation>
    <location>
        <position position="840"/>
    </location>
</feature>
<protein>
    <recommendedName>
        <fullName evidence="8">Patched domain-containing protein 1</fullName>
    </recommendedName>
</protein>
<accession>Q14B62</accession>
<accession>B1AZU9</accession>
<accession>Q14B63</accession>
<accession>Q8BZA5</accession>